<reference key="1">
    <citation type="journal article" date="2001" name="Science">
        <title>The genome of the natural genetic engineer Agrobacterium tumefaciens C58.</title>
        <authorList>
            <person name="Wood D.W."/>
            <person name="Setubal J.C."/>
            <person name="Kaul R."/>
            <person name="Monks D.E."/>
            <person name="Kitajima J.P."/>
            <person name="Okura V.K."/>
            <person name="Zhou Y."/>
            <person name="Chen L."/>
            <person name="Wood G.E."/>
            <person name="Almeida N.F. Jr."/>
            <person name="Woo L."/>
            <person name="Chen Y."/>
            <person name="Paulsen I.T."/>
            <person name="Eisen J.A."/>
            <person name="Karp P.D."/>
            <person name="Bovee D. Sr."/>
            <person name="Chapman P."/>
            <person name="Clendenning J."/>
            <person name="Deatherage G."/>
            <person name="Gillet W."/>
            <person name="Grant C."/>
            <person name="Kutyavin T."/>
            <person name="Levy R."/>
            <person name="Li M.-J."/>
            <person name="McClelland E."/>
            <person name="Palmieri A."/>
            <person name="Raymond C."/>
            <person name="Rouse G."/>
            <person name="Saenphimmachak C."/>
            <person name="Wu Z."/>
            <person name="Romero P."/>
            <person name="Gordon D."/>
            <person name="Zhang S."/>
            <person name="Yoo H."/>
            <person name="Tao Y."/>
            <person name="Biddle P."/>
            <person name="Jung M."/>
            <person name="Krespan W."/>
            <person name="Perry M."/>
            <person name="Gordon-Kamm B."/>
            <person name="Liao L."/>
            <person name="Kim S."/>
            <person name="Hendrick C."/>
            <person name="Zhao Z.-Y."/>
            <person name="Dolan M."/>
            <person name="Chumley F."/>
            <person name="Tingey S.V."/>
            <person name="Tomb J.-F."/>
            <person name="Gordon M.P."/>
            <person name="Olson M.V."/>
            <person name="Nester E.W."/>
        </authorList>
    </citation>
    <scope>NUCLEOTIDE SEQUENCE [LARGE SCALE GENOMIC DNA]</scope>
    <source>
        <strain>C58 / ATCC 33970</strain>
    </source>
</reference>
<reference key="2">
    <citation type="journal article" date="2001" name="Science">
        <title>Genome sequence of the plant pathogen and biotechnology agent Agrobacterium tumefaciens C58.</title>
        <authorList>
            <person name="Goodner B."/>
            <person name="Hinkle G."/>
            <person name="Gattung S."/>
            <person name="Miller N."/>
            <person name="Blanchard M."/>
            <person name="Qurollo B."/>
            <person name="Goldman B.S."/>
            <person name="Cao Y."/>
            <person name="Askenazi M."/>
            <person name="Halling C."/>
            <person name="Mullin L."/>
            <person name="Houmiel K."/>
            <person name="Gordon J."/>
            <person name="Vaudin M."/>
            <person name="Iartchouk O."/>
            <person name="Epp A."/>
            <person name="Liu F."/>
            <person name="Wollam C."/>
            <person name="Allinger M."/>
            <person name="Doughty D."/>
            <person name="Scott C."/>
            <person name="Lappas C."/>
            <person name="Markelz B."/>
            <person name="Flanagan C."/>
            <person name="Crowell C."/>
            <person name="Gurson J."/>
            <person name="Lomo C."/>
            <person name="Sear C."/>
            <person name="Strub G."/>
            <person name="Cielo C."/>
            <person name="Slater S."/>
        </authorList>
    </citation>
    <scope>NUCLEOTIDE SEQUENCE [LARGE SCALE GENOMIC DNA]</scope>
    <source>
        <strain>C58 / ATCC 33970</strain>
    </source>
</reference>
<evidence type="ECO:0000255" key="1">
    <source>
        <dbReference type="HAMAP-Rule" id="MF_00006"/>
    </source>
</evidence>
<sequence length="466" mass="50989">MADGTDQKSSNQMWGGRFASGPSAIMEEINASIGFDKKLYAQDIRGSIAHATMLAEKGIISQEDKEKIVHGLNTILSEIEAGTFEFSRKLEDIHMNIEARLATLIGTAAGRLHTARSRNDQVALDFRLWVKEELQKTEGMLTALIAAFLDRAEENADTVMPGFTHLQTAQPVTFGHHCMAYVEMFGRDRARVRHAIEHLDESPIGAAALAGTGYPIDRHMTAKALGFREPTRNSIDTVSDRDFALEFLSIASICATHLSRLAEEIVIWSTPQFGFIRLSDAFSTGSSIMPQKKNPDAAELVRAKTGRINGSLVALLTVMKGLPLAYSKDMQEDKEQVFDSAESLELAIAAMTGMIRDLEVRKDRMRAAAGSGYSTATDLADWLVREAGLPFRDAHHVTGNAVALAEKKGCDLADLSLEELQAIHPDITNGIFDVLSVEASVASRTSFGGTAPSEVRKQIAWWRGRN</sequence>
<feature type="chain" id="PRO_0000137730" description="Argininosuccinate lyase 1">
    <location>
        <begin position="1"/>
        <end position="466"/>
    </location>
</feature>
<organism>
    <name type="scientific">Agrobacterium fabrum (strain C58 / ATCC 33970)</name>
    <name type="common">Agrobacterium tumefaciens (strain C58)</name>
    <dbReference type="NCBI Taxonomy" id="176299"/>
    <lineage>
        <taxon>Bacteria</taxon>
        <taxon>Pseudomonadati</taxon>
        <taxon>Pseudomonadota</taxon>
        <taxon>Alphaproteobacteria</taxon>
        <taxon>Hyphomicrobiales</taxon>
        <taxon>Rhizobiaceae</taxon>
        <taxon>Rhizobium/Agrobacterium group</taxon>
        <taxon>Agrobacterium</taxon>
        <taxon>Agrobacterium tumefaciens complex</taxon>
    </lineage>
</organism>
<keyword id="KW-0028">Amino-acid biosynthesis</keyword>
<keyword id="KW-0055">Arginine biosynthesis</keyword>
<keyword id="KW-0963">Cytoplasm</keyword>
<keyword id="KW-0456">Lyase</keyword>
<keyword id="KW-1185">Reference proteome</keyword>
<dbReference type="EC" id="4.3.2.1" evidence="1"/>
<dbReference type="EMBL" id="AE007870">
    <property type="protein sequence ID" value="AAK89798.2"/>
    <property type="molecule type" value="Genomic_DNA"/>
</dbReference>
<dbReference type="PIR" id="AE2999">
    <property type="entry name" value="AE2999"/>
</dbReference>
<dbReference type="PIR" id="D98284">
    <property type="entry name" value="D98284"/>
</dbReference>
<dbReference type="RefSeq" id="NP_357013.2">
    <property type="nucleotide sequence ID" value="NC_003063.2"/>
</dbReference>
<dbReference type="RefSeq" id="WP_006316155.1">
    <property type="nucleotide sequence ID" value="NC_003063.2"/>
</dbReference>
<dbReference type="SMR" id="Q8U9X6"/>
<dbReference type="STRING" id="176299.Atu3599"/>
<dbReference type="EnsemblBacteria" id="AAK89798">
    <property type="protein sequence ID" value="AAK89798"/>
    <property type="gene ID" value="Atu3599"/>
</dbReference>
<dbReference type="GeneID" id="1135473"/>
<dbReference type="KEGG" id="atu:Atu3599"/>
<dbReference type="PATRIC" id="fig|176299.10.peg.3445"/>
<dbReference type="eggNOG" id="COG0165">
    <property type="taxonomic scope" value="Bacteria"/>
</dbReference>
<dbReference type="HOGENOM" id="CLU_027272_2_3_5"/>
<dbReference type="OrthoDB" id="9769623at2"/>
<dbReference type="PhylomeDB" id="Q8U9X6"/>
<dbReference type="BioCyc" id="AGRO:ATU3599-MONOMER"/>
<dbReference type="UniPathway" id="UPA00068">
    <property type="reaction ID" value="UER00114"/>
</dbReference>
<dbReference type="Proteomes" id="UP000000813">
    <property type="component" value="Chromosome linear"/>
</dbReference>
<dbReference type="GO" id="GO:0005829">
    <property type="term" value="C:cytosol"/>
    <property type="evidence" value="ECO:0007669"/>
    <property type="project" value="TreeGrafter"/>
</dbReference>
<dbReference type="GO" id="GO:0004056">
    <property type="term" value="F:argininosuccinate lyase activity"/>
    <property type="evidence" value="ECO:0007669"/>
    <property type="project" value="UniProtKB-UniRule"/>
</dbReference>
<dbReference type="GO" id="GO:0042450">
    <property type="term" value="P:arginine biosynthetic process via ornithine"/>
    <property type="evidence" value="ECO:0007669"/>
    <property type="project" value="InterPro"/>
</dbReference>
<dbReference type="GO" id="GO:0006526">
    <property type="term" value="P:L-arginine biosynthetic process"/>
    <property type="evidence" value="ECO:0007669"/>
    <property type="project" value="UniProtKB-UniRule"/>
</dbReference>
<dbReference type="CDD" id="cd01359">
    <property type="entry name" value="Argininosuccinate_lyase"/>
    <property type="match status" value="1"/>
</dbReference>
<dbReference type="FunFam" id="1.10.275.10:FF:000002">
    <property type="entry name" value="Argininosuccinate lyase"/>
    <property type="match status" value="1"/>
</dbReference>
<dbReference type="FunFam" id="1.10.40.30:FF:000001">
    <property type="entry name" value="Argininosuccinate lyase"/>
    <property type="match status" value="1"/>
</dbReference>
<dbReference type="FunFam" id="1.20.200.10:FF:000015">
    <property type="entry name" value="argininosuccinate lyase isoform X2"/>
    <property type="match status" value="1"/>
</dbReference>
<dbReference type="Gene3D" id="1.10.40.30">
    <property type="entry name" value="Fumarase/aspartase (C-terminal domain)"/>
    <property type="match status" value="1"/>
</dbReference>
<dbReference type="Gene3D" id="1.20.200.10">
    <property type="entry name" value="Fumarase/aspartase (Central domain)"/>
    <property type="match status" value="1"/>
</dbReference>
<dbReference type="Gene3D" id="1.10.275.10">
    <property type="entry name" value="Fumarase/aspartase (N-terminal domain)"/>
    <property type="match status" value="1"/>
</dbReference>
<dbReference type="HAMAP" id="MF_00006">
    <property type="entry name" value="Arg_succ_lyase"/>
    <property type="match status" value="1"/>
</dbReference>
<dbReference type="InterPro" id="IPR029419">
    <property type="entry name" value="Arg_succ_lyase_C"/>
</dbReference>
<dbReference type="InterPro" id="IPR009049">
    <property type="entry name" value="Argininosuccinate_lyase"/>
</dbReference>
<dbReference type="InterPro" id="IPR024083">
    <property type="entry name" value="Fumarase/histidase_N"/>
</dbReference>
<dbReference type="InterPro" id="IPR020557">
    <property type="entry name" value="Fumarate_lyase_CS"/>
</dbReference>
<dbReference type="InterPro" id="IPR000362">
    <property type="entry name" value="Fumarate_lyase_fam"/>
</dbReference>
<dbReference type="InterPro" id="IPR022761">
    <property type="entry name" value="Fumarate_lyase_N"/>
</dbReference>
<dbReference type="InterPro" id="IPR008948">
    <property type="entry name" value="L-Aspartase-like"/>
</dbReference>
<dbReference type="NCBIfam" id="TIGR00838">
    <property type="entry name" value="argH"/>
    <property type="match status" value="1"/>
</dbReference>
<dbReference type="PANTHER" id="PTHR43814">
    <property type="entry name" value="ARGININOSUCCINATE LYASE"/>
    <property type="match status" value="1"/>
</dbReference>
<dbReference type="PANTHER" id="PTHR43814:SF1">
    <property type="entry name" value="ARGININOSUCCINATE LYASE"/>
    <property type="match status" value="1"/>
</dbReference>
<dbReference type="Pfam" id="PF14698">
    <property type="entry name" value="ASL_C2"/>
    <property type="match status" value="1"/>
</dbReference>
<dbReference type="Pfam" id="PF00206">
    <property type="entry name" value="Lyase_1"/>
    <property type="match status" value="1"/>
</dbReference>
<dbReference type="PRINTS" id="PR00145">
    <property type="entry name" value="ARGSUCLYASE"/>
</dbReference>
<dbReference type="PRINTS" id="PR00149">
    <property type="entry name" value="FUMRATELYASE"/>
</dbReference>
<dbReference type="SUPFAM" id="SSF48557">
    <property type="entry name" value="L-aspartase-like"/>
    <property type="match status" value="1"/>
</dbReference>
<dbReference type="PROSITE" id="PS00163">
    <property type="entry name" value="FUMARATE_LYASES"/>
    <property type="match status" value="1"/>
</dbReference>
<name>ARLY1_AGRFC</name>
<proteinExistence type="inferred from homology"/>
<accession>Q8U9X6</accession>
<comment type="catalytic activity">
    <reaction evidence="1">
        <text>2-(N(omega)-L-arginino)succinate = fumarate + L-arginine</text>
        <dbReference type="Rhea" id="RHEA:24020"/>
        <dbReference type="ChEBI" id="CHEBI:29806"/>
        <dbReference type="ChEBI" id="CHEBI:32682"/>
        <dbReference type="ChEBI" id="CHEBI:57472"/>
        <dbReference type="EC" id="4.3.2.1"/>
    </reaction>
</comment>
<comment type="pathway">
    <text evidence="1">Amino-acid biosynthesis; L-arginine biosynthesis; L-arginine from L-ornithine and carbamoyl phosphate: step 3/3.</text>
</comment>
<comment type="subcellular location">
    <subcellularLocation>
        <location evidence="1">Cytoplasm</location>
    </subcellularLocation>
</comment>
<comment type="similarity">
    <text evidence="1">Belongs to the lyase 1 family. Argininosuccinate lyase subfamily.</text>
</comment>
<protein>
    <recommendedName>
        <fullName evidence="1">Argininosuccinate lyase 1</fullName>
        <shortName evidence="1">ASAL 1</shortName>
        <ecNumber evidence="1">4.3.2.1</ecNumber>
    </recommendedName>
    <alternativeName>
        <fullName evidence="1">Arginosuccinase</fullName>
    </alternativeName>
</protein>
<gene>
    <name evidence="1" type="primary">argH1</name>
    <name type="ordered locus">Atu3599</name>
    <name type="ORF">AGR_L_2457</name>
</gene>